<reference key="1">
    <citation type="journal article" date="2002" name="Nature">
        <title>The genome sequence of Schizosaccharomyces pombe.</title>
        <authorList>
            <person name="Wood V."/>
            <person name="Gwilliam R."/>
            <person name="Rajandream M.A."/>
            <person name="Lyne M.H."/>
            <person name="Lyne R."/>
            <person name="Stewart A."/>
            <person name="Sgouros J.G."/>
            <person name="Peat N."/>
            <person name="Hayles J."/>
            <person name="Baker S.G."/>
            <person name="Basham D."/>
            <person name="Bowman S."/>
            <person name="Brooks K."/>
            <person name="Brown D."/>
            <person name="Brown S."/>
            <person name="Chillingworth T."/>
            <person name="Churcher C.M."/>
            <person name="Collins M."/>
            <person name="Connor R."/>
            <person name="Cronin A."/>
            <person name="Davis P."/>
            <person name="Feltwell T."/>
            <person name="Fraser A."/>
            <person name="Gentles S."/>
            <person name="Goble A."/>
            <person name="Hamlin N."/>
            <person name="Harris D.E."/>
            <person name="Hidalgo J."/>
            <person name="Hodgson G."/>
            <person name="Holroyd S."/>
            <person name="Hornsby T."/>
            <person name="Howarth S."/>
            <person name="Huckle E.J."/>
            <person name="Hunt S."/>
            <person name="Jagels K."/>
            <person name="James K.D."/>
            <person name="Jones L."/>
            <person name="Jones M."/>
            <person name="Leather S."/>
            <person name="McDonald S."/>
            <person name="McLean J."/>
            <person name="Mooney P."/>
            <person name="Moule S."/>
            <person name="Mungall K.L."/>
            <person name="Murphy L.D."/>
            <person name="Niblett D."/>
            <person name="Odell C."/>
            <person name="Oliver K."/>
            <person name="O'Neil S."/>
            <person name="Pearson D."/>
            <person name="Quail M.A."/>
            <person name="Rabbinowitsch E."/>
            <person name="Rutherford K.M."/>
            <person name="Rutter S."/>
            <person name="Saunders D."/>
            <person name="Seeger K."/>
            <person name="Sharp S."/>
            <person name="Skelton J."/>
            <person name="Simmonds M.N."/>
            <person name="Squares R."/>
            <person name="Squares S."/>
            <person name="Stevens K."/>
            <person name="Taylor K."/>
            <person name="Taylor R.G."/>
            <person name="Tivey A."/>
            <person name="Walsh S.V."/>
            <person name="Warren T."/>
            <person name="Whitehead S."/>
            <person name="Woodward J.R."/>
            <person name="Volckaert G."/>
            <person name="Aert R."/>
            <person name="Robben J."/>
            <person name="Grymonprez B."/>
            <person name="Weltjens I."/>
            <person name="Vanstreels E."/>
            <person name="Rieger M."/>
            <person name="Schaefer M."/>
            <person name="Mueller-Auer S."/>
            <person name="Gabel C."/>
            <person name="Fuchs M."/>
            <person name="Duesterhoeft A."/>
            <person name="Fritzc C."/>
            <person name="Holzer E."/>
            <person name="Moestl D."/>
            <person name="Hilbert H."/>
            <person name="Borzym K."/>
            <person name="Langer I."/>
            <person name="Beck A."/>
            <person name="Lehrach H."/>
            <person name="Reinhardt R."/>
            <person name="Pohl T.M."/>
            <person name="Eger P."/>
            <person name="Zimmermann W."/>
            <person name="Wedler H."/>
            <person name="Wambutt R."/>
            <person name="Purnelle B."/>
            <person name="Goffeau A."/>
            <person name="Cadieu E."/>
            <person name="Dreano S."/>
            <person name="Gloux S."/>
            <person name="Lelaure V."/>
            <person name="Mottier S."/>
            <person name="Galibert F."/>
            <person name="Aves S.J."/>
            <person name="Xiang Z."/>
            <person name="Hunt C."/>
            <person name="Moore K."/>
            <person name="Hurst S.M."/>
            <person name="Lucas M."/>
            <person name="Rochet M."/>
            <person name="Gaillardin C."/>
            <person name="Tallada V.A."/>
            <person name="Garzon A."/>
            <person name="Thode G."/>
            <person name="Daga R.R."/>
            <person name="Cruzado L."/>
            <person name="Jimenez J."/>
            <person name="Sanchez M."/>
            <person name="del Rey F."/>
            <person name="Benito J."/>
            <person name="Dominguez A."/>
            <person name="Revuelta J.L."/>
            <person name="Moreno S."/>
            <person name="Armstrong J."/>
            <person name="Forsburg S.L."/>
            <person name="Cerutti L."/>
            <person name="Lowe T."/>
            <person name="McCombie W.R."/>
            <person name="Paulsen I."/>
            <person name="Potashkin J."/>
            <person name="Shpakovski G.V."/>
            <person name="Ussery D."/>
            <person name="Barrell B.G."/>
            <person name="Nurse P."/>
        </authorList>
    </citation>
    <scope>NUCLEOTIDE SEQUENCE [LARGE SCALE GENOMIC DNA]</scope>
    <source>
        <strain>972 / ATCC 24843</strain>
    </source>
</reference>
<reference key="2">
    <citation type="journal article" date="2006" name="Nat. Biotechnol.">
        <title>ORFeome cloning and global analysis of protein localization in the fission yeast Schizosaccharomyces pombe.</title>
        <authorList>
            <person name="Matsuyama A."/>
            <person name="Arai R."/>
            <person name="Yashiroda Y."/>
            <person name="Shirai A."/>
            <person name="Kamata A."/>
            <person name="Sekido S."/>
            <person name="Kobayashi Y."/>
            <person name="Hashimoto A."/>
            <person name="Hamamoto M."/>
            <person name="Hiraoka Y."/>
            <person name="Horinouchi S."/>
            <person name="Yoshida M."/>
        </authorList>
    </citation>
    <scope>SUBCELLULAR LOCATION [LARGE SCALE ANALYSIS]</scope>
</reference>
<feature type="chain" id="PRO_0000310310" description="Uncharacterized oxidoreductase C2F3.05c">
    <location>
        <begin position="1"/>
        <end position="275"/>
    </location>
</feature>
<feature type="active site" description="Proton donor" evidence="1">
    <location>
        <position position="50"/>
    </location>
</feature>
<feature type="active site" description="Proton donor" evidence="1">
    <location>
        <position position="111"/>
    </location>
</feature>
<feature type="binding site" evidence="1">
    <location>
        <position position="45"/>
    </location>
    <ligand>
        <name>NADPH</name>
        <dbReference type="ChEBI" id="CHEBI:57783"/>
    </ligand>
</feature>
<feature type="binding site" evidence="1">
    <location>
        <position position="139"/>
    </location>
    <ligand>
        <name>NADPH</name>
        <dbReference type="ChEBI" id="CHEBI:57783"/>
    </ligand>
</feature>
<feature type="binding site" evidence="1">
    <location>
        <position position="162"/>
    </location>
    <ligand>
        <name>NADPH</name>
        <dbReference type="ChEBI" id="CHEBI:57783"/>
    </ligand>
</feature>
<feature type="binding site" evidence="1">
    <location>
        <position position="191"/>
    </location>
    <ligand>
        <name>NADPH</name>
        <dbReference type="ChEBI" id="CHEBI:57783"/>
    </ligand>
</feature>
<feature type="binding site" evidence="1">
    <location>
        <position position="196"/>
    </location>
    <ligand>
        <name>NADPH</name>
        <dbReference type="ChEBI" id="CHEBI:57783"/>
    </ligand>
</feature>
<feature type="binding site" evidence="1">
    <location>
        <position position="232"/>
    </location>
    <ligand>
        <name>NADPH</name>
        <dbReference type="ChEBI" id="CHEBI:57783"/>
    </ligand>
</feature>
<feature type="binding site" evidence="1">
    <location>
        <position position="233"/>
    </location>
    <ligand>
        <name>NADPH</name>
        <dbReference type="ChEBI" id="CHEBI:57783"/>
    </ligand>
</feature>
<feature type="binding site" evidence="1">
    <location>
        <position position="237"/>
    </location>
    <ligand>
        <name>NADPH</name>
        <dbReference type="ChEBI" id="CHEBI:57783"/>
    </ligand>
</feature>
<feature type="site" description="Lowers pKa of active site Tyr" evidence="1">
    <location>
        <position position="79"/>
    </location>
</feature>
<gene>
    <name type="ORF">SPAC2F3.05c</name>
</gene>
<protein>
    <recommendedName>
        <fullName>Uncharacterized oxidoreductase C2F3.05c</fullName>
        <ecNumber>1.-.-.-</ecNumber>
    </recommendedName>
</protein>
<proteinExistence type="inferred from homology"/>
<organism>
    <name type="scientific">Schizosaccharomyces pombe (strain 972 / ATCC 24843)</name>
    <name type="common">Fission yeast</name>
    <dbReference type="NCBI Taxonomy" id="284812"/>
    <lineage>
        <taxon>Eukaryota</taxon>
        <taxon>Fungi</taxon>
        <taxon>Dikarya</taxon>
        <taxon>Ascomycota</taxon>
        <taxon>Taphrinomycotina</taxon>
        <taxon>Schizosaccharomycetes</taxon>
        <taxon>Schizosaccharomycetales</taxon>
        <taxon>Schizosaccharomycetaceae</taxon>
        <taxon>Schizosaccharomyces</taxon>
    </lineage>
</organism>
<accession>O14088</accession>
<evidence type="ECO:0000250" key="1">
    <source>
        <dbReference type="UniProtKB" id="Q76L36"/>
    </source>
</evidence>
<evidence type="ECO:0000269" key="2">
    <source>
    </source>
</evidence>
<evidence type="ECO:0000305" key="3"/>
<dbReference type="EC" id="1.-.-.-"/>
<dbReference type="EMBL" id="CU329670">
    <property type="protein sequence ID" value="CAB16262.1"/>
    <property type="molecule type" value="Genomic_DNA"/>
</dbReference>
<dbReference type="PIR" id="T38538">
    <property type="entry name" value="T38538"/>
</dbReference>
<dbReference type="RefSeq" id="NP_594384.1">
    <property type="nucleotide sequence ID" value="NM_001019805.2"/>
</dbReference>
<dbReference type="SMR" id="O14088"/>
<dbReference type="BioGRID" id="278445">
    <property type="interactions" value="1"/>
</dbReference>
<dbReference type="FunCoup" id="O14088">
    <property type="interactions" value="50"/>
</dbReference>
<dbReference type="STRING" id="284812.O14088"/>
<dbReference type="PaxDb" id="4896-SPAC2F3.05c.1"/>
<dbReference type="EnsemblFungi" id="SPAC2F3.05c.1">
    <property type="protein sequence ID" value="SPAC2F3.05c.1:pep"/>
    <property type="gene ID" value="SPAC2F3.05c"/>
</dbReference>
<dbReference type="KEGG" id="spo:2541958"/>
<dbReference type="PomBase" id="SPAC2F3.05c"/>
<dbReference type="VEuPathDB" id="FungiDB:SPAC2F3.05c"/>
<dbReference type="eggNOG" id="KOG1577">
    <property type="taxonomic scope" value="Eukaryota"/>
</dbReference>
<dbReference type="HOGENOM" id="CLU_023205_0_1_1"/>
<dbReference type="InParanoid" id="O14088"/>
<dbReference type="OMA" id="PWCMRQE"/>
<dbReference type="PhylomeDB" id="O14088"/>
<dbReference type="PRO" id="PR:O14088"/>
<dbReference type="Proteomes" id="UP000002485">
    <property type="component" value="Chromosome I"/>
</dbReference>
<dbReference type="GO" id="GO:0005829">
    <property type="term" value="C:cytosol"/>
    <property type="evidence" value="ECO:0007005"/>
    <property type="project" value="PomBase"/>
</dbReference>
<dbReference type="GO" id="GO:0005634">
    <property type="term" value="C:nucleus"/>
    <property type="evidence" value="ECO:0007005"/>
    <property type="project" value="PomBase"/>
</dbReference>
<dbReference type="GO" id="GO:0004033">
    <property type="term" value="F:aldo-keto reductase (NADPH) activity"/>
    <property type="evidence" value="ECO:0000318"/>
    <property type="project" value="GO_Central"/>
</dbReference>
<dbReference type="GO" id="GO:0032866">
    <property type="term" value="F:D-xylose reductase (NADPH) activity"/>
    <property type="evidence" value="ECO:0000266"/>
    <property type="project" value="PomBase"/>
</dbReference>
<dbReference type="GO" id="GO:0032867">
    <property type="term" value="F:L-arabinose reductase (NADPH) activity"/>
    <property type="evidence" value="ECO:0000266"/>
    <property type="project" value="PomBase"/>
</dbReference>
<dbReference type="GO" id="GO:0019568">
    <property type="term" value="P:arabinose catabolic process"/>
    <property type="evidence" value="ECO:0000266"/>
    <property type="project" value="PomBase"/>
</dbReference>
<dbReference type="GO" id="GO:0042843">
    <property type="term" value="P:D-xylose catabolic process"/>
    <property type="evidence" value="ECO:0000266"/>
    <property type="project" value="PomBase"/>
</dbReference>
<dbReference type="CDD" id="cd19071">
    <property type="entry name" value="AKR_AKR1-5-like"/>
    <property type="match status" value="1"/>
</dbReference>
<dbReference type="FunFam" id="3.20.20.100:FF:000015">
    <property type="entry name" value="Oxidoreductase, aldo/keto reductase family"/>
    <property type="match status" value="1"/>
</dbReference>
<dbReference type="Gene3D" id="3.20.20.100">
    <property type="entry name" value="NADP-dependent oxidoreductase domain"/>
    <property type="match status" value="1"/>
</dbReference>
<dbReference type="InterPro" id="IPR020471">
    <property type="entry name" value="AKR"/>
</dbReference>
<dbReference type="InterPro" id="IPR018170">
    <property type="entry name" value="Aldo/ket_reductase_CS"/>
</dbReference>
<dbReference type="InterPro" id="IPR023210">
    <property type="entry name" value="NADP_OxRdtase_dom"/>
</dbReference>
<dbReference type="InterPro" id="IPR036812">
    <property type="entry name" value="NADP_OxRdtase_dom_sf"/>
</dbReference>
<dbReference type="PANTHER" id="PTHR43827">
    <property type="entry name" value="2,5-DIKETO-D-GLUCONIC ACID REDUCTASE"/>
    <property type="match status" value="1"/>
</dbReference>
<dbReference type="PANTHER" id="PTHR43827:SF13">
    <property type="entry name" value="ALDO_KETO REDUCTASE FAMILY PROTEIN"/>
    <property type="match status" value="1"/>
</dbReference>
<dbReference type="Pfam" id="PF00248">
    <property type="entry name" value="Aldo_ket_red"/>
    <property type="match status" value="1"/>
</dbReference>
<dbReference type="PIRSF" id="PIRSF000097">
    <property type="entry name" value="AKR"/>
    <property type="match status" value="1"/>
</dbReference>
<dbReference type="PRINTS" id="PR00069">
    <property type="entry name" value="ALDKETRDTASE"/>
</dbReference>
<dbReference type="SUPFAM" id="SSF51430">
    <property type="entry name" value="NAD(P)-linked oxidoreductase"/>
    <property type="match status" value="1"/>
</dbReference>
<dbReference type="PROSITE" id="PS00798">
    <property type="entry name" value="ALDOKETO_REDUCTASE_1"/>
    <property type="match status" value="1"/>
</dbReference>
<dbReference type="PROSITE" id="PS00063">
    <property type="entry name" value="ALDOKETO_REDUCTASE_3"/>
    <property type="match status" value="1"/>
</dbReference>
<comment type="subcellular location">
    <subcellularLocation>
        <location evidence="2">Cytoplasm</location>
    </subcellularLocation>
    <subcellularLocation>
        <location evidence="2">Nucleus</location>
    </subcellularLocation>
</comment>
<comment type="similarity">
    <text evidence="3">Belongs to the aldo/keto reductase family.</text>
</comment>
<name>YER5_SCHPO</name>
<sequence>MLGSFVKLNNGLKCPQFAYGSYMVNRTKCFDSVYAALQCGYRHIDSAQMYHNEADCGRAILKFMEETGTKREDIWFTSKLNDLSGYKSTLSSIDASVKACGLGYIDLFLLHSPYGDRIESWKALEKGVEEGKLRAIGVSNFGPHHIQELLDSHPKIIPCVNQIELHPFCSQQKVVDYCESKGIQLAAYAPLVHGEKFGNKQLLAIASKYNKSEAQIMIRYCLQRGFIVLPKSSTPRRIKENGDVFDFEISKEDMEKLYNLDEDYHSDWNPCVSPL</sequence>
<keyword id="KW-0963">Cytoplasm</keyword>
<keyword id="KW-0521">NADP</keyword>
<keyword id="KW-0539">Nucleus</keyword>
<keyword id="KW-0560">Oxidoreductase</keyword>
<keyword id="KW-1185">Reference proteome</keyword>